<organism evidence="2">
    <name type="scientific">Infectious hypodermal and hematopoietic necrosis virus (strain Hawaii)</name>
    <name type="common">IHHNV</name>
    <dbReference type="NCBI Taxonomy" id="269647"/>
    <lineage>
        <taxon>Viruses</taxon>
        <taxon>Monodnaviria</taxon>
        <taxon>Shotokuvirae</taxon>
        <taxon>Cossaviricota</taxon>
        <taxon>Quintoviricetes</taxon>
        <taxon>Piccovirales</taxon>
        <taxon>Parvoviridae</taxon>
        <taxon>Densovirinae</taxon>
        <taxon>Penstyldensovirus</taxon>
        <taxon>Infectious hypodermal and hematopoietic necrosis virus</taxon>
    </lineage>
</organism>
<protein>
    <recommendedName>
        <fullName>Capsid protein VP1/VP2</fullName>
    </recommendedName>
    <alternativeName>
        <fullName>37 kDa protein</fullName>
    </alternativeName>
    <alternativeName>
        <fullName>Coat protein VP1/VP2</fullName>
    </alternativeName>
</protein>
<dbReference type="GO" id="GO:0019028">
    <property type="term" value="C:viral capsid"/>
    <property type="evidence" value="ECO:0007669"/>
    <property type="project" value="UniProtKB-KW"/>
</dbReference>
<dbReference type="GO" id="GO:0075512">
    <property type="term" value="P:clathrin-dependent endocytosis of virus by host cell"/>
    <property type="evidence" value="ECO:0007669"/>
    <property type="project" value="UniProtKB-KW"/>
</dbReference>
<dbReference type="GO" id="GO:0140267">
    <property type="term" value="P:symbiont entry into host cell via permeabilization of host membrane"/>
    <property type="evidence" value="ECO:0007669"/>
    <property type="project" value="UniProtKB-KW"/>
</dbReference>
<dbReference type="GO" id="GO:0019062">
    <property type="term" value="P:virion attachment to host cell"/>
    <property type="evidence" value="ECO:0007669"/>
    <property type="project" value="UniProtKB-KW"/>
</dbReference>
<evidence type="ECO:0000250" key="1"/>
<evidence type="ECO:0000305" key="2"/>
<feature type="chain" id="PRO_0000222476" description="Capsid protein VP1/VP2">
    <location>
        <begin position="1"/>
        <end position="13" status="greater than"/>
    </location>
</feature>
<feature type="non-terminal residue" evidence="2">
    <location>
        <position position="13"/>
    </location>
</feature>
<proteinExistence type="evidence at protein level"/>
<sequence length="13" mass="1439">DAHNEDEEHAEGS</sequence>
<comment type="function">
    <text evidence="1">Capsid protein self-assembles to form an icosahedral capsid with a T=1 symmetry, about 22 nm in diameter, and consisting of 60 copies of size variants of the capsid proteins, which differ in the N-terminushe capsid encapsulates the genomic ssDNA. Capsid proteins are responsible for the attachment to host cell receptors. This attachment induces virion internalization predominantly through clathrin-dependent endocytosis (By similarity).</text>
</comment>
<comment type="subcellular location">
    <subcellularLocation>
        <location evidence="2">Virion</location>
    </subcellularLocation>
</comment>
<reference evidence="2" key="1">
    <citation type="submission" date="1999-12" db="UniProtKB">
        <title>Comparison of two parvoviruses infectious for Penaeid shrimp.</title>
        <authorList>
            <person name="Pantoja C.M."/>
            <person name="Poulos B.T."/>
            <person name="Lightner D.V."/>
        </authorList>
    </citation>
    <scope>PROTEIN SEQUENCE</scope>
</reference>
<organismHost>
    <name type="scientific">Penaeidae</name>
    <name type="common">penaeid shrimps</name>
    <dbReference type="NCBI Taxonomy" id="6685"/>
</organismHost>
<keyword id="KW-0167">Capsid protein</keyword>
<keyword id="KW-1165">Clathrin-mediated endocytosis of virus by host</keyword>
<keyword id="KW-0903">Direct protein sequencing</keyword>
<keyword id="KW-0945">Host-virus interaction</keyword>
<keyword id="KW-1161">Viral attachment to host cell</keyword>
<keyword id="KW-1162">Viral penetration into host cytoplasm</keyword>
<keyword id="KW-1173">Viral penetration via permeabilization of host membrane</keyword>
<keyword id="KW-0946">Virion</keyword>
<keyword id="KW-1164">Virus endocytosis by host</keyword>
<keyword id="KW-1160">Virus entry into host cell</keyword>
<accession>P82256</accession>
<name>CAPSD_IHHNH</name>